<organism>
    <name type="scientific">Pongo abelii</name>
    <name type="common">Sumatran orangutan</name>
    <name type="synonym">Pongo pygmaeus abelii</name>
    <dbReference type="NCBI Taxonomy" id="9601"/>
    <lineage>
        <taxon>Eukaryota</taxon>
        <taxon>Metazoa</taxon>
        <taxon>Chordata</taxon>
        <taxon>Craniata</taxon>
        <taxon>Vertebrata</taxon>
        <taxon>Euteleostomi</taxon>
        <taxon>Mammalia</taxon>
        <taxon>Eutheria</taxon>
        <taxon>Euarchontoglires</taxon>
        <taxon>Primates</taxon>
        <taxon>Haplorrhini</taxon>
        <taxon>Catarrhini</taxon>
        <taxon>Hominidae</taxon>
        <taxon>Pongo</taxon>
    </lineage>
</organism>
<sequence>MFCVTPPELETKMNITKGGLVLFSANSNSSCMELSKKIAERLGVEMGKVQVYQEPNRETRVQIQESVRGKDVFIIQTISKDVNTTIMELLIMVYACKTSCAKSIIGVIPYFPYSKQCKMRKRGSIVSKLLASMMCKAGLTHLITMDLHQKEIQGFFNIPVDNLRASPFLLQYIQEEIPDYRNAVIVAKSPASAKRAQSFAERLRLGIAVIHGEAQDAESDLVDGRHSPPMVRSVAAIHPSLEIPMLIPKEKPPITVVGDVGGRIAIIVDDIIDDVDSFLAAAETLKERGAYKIFVMATHGLLSSDAPRLIEESAIDEVVVTNTIPHEVQKLQCPKIKTVDISMILSEAIRRIHNGESMSYLFRNIGLDD</sequence>
<keyword id="KW-0007">Acetylation</keyword>
<keyword id="KW-0545">Nucleotide biosynthesis</keyword>
<keyword id="KW-0597">Phosphoprotein</keyword>
<keyword id="KW-1185">Reference proteome</keyword>
<accession>Q5RBA8</accession>
<feature type="chain" id="PRO_0000366926" description="Phosphoribosyl pyrophosphate synthase-associated protein 2">
    <location>
        <begin position="1"/>
        <end position="369"/>
    </location>
</feature>
<feature type="modified residue" description="N-acetylmethionine" evidence="2">
    <location>
        <position position="1"/>
    </location>
</feature>
<feature type="modified residue" description="Phosphothreonine" evidence="2">
    <location>
        <position position="5"/>
    </location>
</feature>
<feature type="modified residue" description="Phosphoserine" evidence="2">
    <location>
        <position position="219"/>
    </location>
</feature>
<feature type="modified residue" description="Phosphoserine" evidence="2">
    <location>
        <position position="227"/>
    </location>
</feature>
<feature type="modified residue" description="Phosphoserine" evidence="2">
    <location>
        <position position="233"/>
    </location>
</feature>
<dbReference type="EMBL" id="CR858743">
    <property type="protein sequence ID" value="CAH90952.1"/>
    <property type="molecule type" value="mRNA"/>
</dbReference>
<dbReference type="RefSeq" id="NP_001127355.1">
    <property type="nucleotide sequence ID" value="NM_001133883.1"/>
</dbReference>
<dbReference type="RefSeq" id="XP_009249649.2">
    <property type="nucleotide sequence ID" value="XM_009251374.4"/>
</dbReference>
<dbReference type="RefSeq" id="XP_009249650.2">
    <property type="nucleotide sequence ID" value="XM_009251375.3"/>
</dbReference>
<dbReference type="RefSeq" id="XP_024097251.2">
    <property type="nucleotide sequence ID" value="XM_024241483.3"/>
</dbReference>
<dbReference type="RefSeq" id="XP_024097252.2">
    <property type="nucleotide sequence ID" value="XM_024241484.3"/>
</dbReference>
<dbReference type="RefSeq" id="XP_024097253.2">
    <property type="nucleotide sequence ID" value="XM_024241485.3"/>
</dbReference>
<dbReference type="RefSeq" id="XP_054391246.1">
    <property type="nucleotide sequence ID" value="XM_054535271.2"/>
</dbReference>
<dbReference type="RefSeq" id="XP_054391249.1">
    <property type="nucleotide sequence ID" value="XM_054535274.2"/>
</dbReference>
<dbReference type="RefSeq" id="XP_054391251.1">
    <property type="nucleotide sequence ID" value="XM_054535276.2"/>
</dbReference>
<dbReference type="RefSeq" id="XP_063573991.1">
    <property type="nucleotide sequence ID" value="XM_063717921.1"/>
</dbReference>
<dbReference type="RefSeq" id="XP_063573992.1">
    <property type="nucleotide sequence ID" value="XM_063717922.1"/>
</dbReference>
<dbReference type="RefSeq" id="XP_063573993.1">
    <property type="nucleotide sequence ID" value="XM_063717923.1"/>
</dbReference>
<dbReference type="SMR" id="Q5RBA8"/>
<dbReference type="FunCoup" id="Q5RBA8">
    <property type="interactions" value="652"/>
</dbReference>
<dbReference type="STRING" id="9601.ENSPPYP00000009060"/>
<dbReference type="GeneID" id="100174419"/>
<dbReference type="KEGG" id="pon:100174419"/>
<dbReference type="CTD" id="5636"/>
<dbReference type="eggNOG" id="KOG1503">
    <property type="taxonomic scope" value="Eukaryota"/>
</dbReference>
<dbReference type="InParanoid" id="Q5RBA8"/>
<dbReference type="OrthoDB" id="413572at2759"/>
<dbReference type="Proteomes" id="UP000001595">
    <property type="component" value="Unplaced"/>
</dbReference>
<dbReference type="GO" id="GO:0005737">
    <property type="term" value="C:cytoplasm"/>
    <property type="evidence" value="ECO:0007669"/>
    <property type="project" value="TreeGrafter"/>
</dbReference>
<dbReference type="GO" id="GO:0002189">
    <property type="term" value="C:ribose phosphate diphosphokinase complex"/>
    <property type="evidence" value="ECO:0007669"/>
    <property type="project" value="TreeGrafter"/>
</dbReference>
<dbReference type="GO" id="GO:0005524">
    <property type="term" value="F:ATP binding"/>
    <property type="evidence" value="ECO:0007669"/>
    <property type="project" value="TreeGrafter"/>
</dbReference>
<dbReference type="GO" id="GO:0000287">
    <property type="term" value="F:magnesium ion binding"/>
    <property type="evidence" value="ECO:0007669"/>
    <property type="project" value="InterPro"/>
</dbReference>
<dbReference type="GO" id="GO:0004749">
    <property type="term" value="F:ribose phosphate diphosphokinase activity"/>
    <property type="evidence" value="ECO:0007669"/>
    <property type="project" value="TreeGrafter"/>
</dbReference>
<dbReference type="GO" id="GO:0006015">
    <property type="term" value="P:5-phosphoribose 1-diphosphate biosynthetic process"/>
    <property type="evidence" value="ECO:0007669"/>
    <property type="project" value="TreeGrafter"/>
</dbReference>
<dbReference type="GO" id="GO:0006164">
    <property type="term" value="P:purine nucleotide biosynthetic process"/>
    <property type="evidence" value="ECO:0007669"/>
    <property type="project" value="TreeGrafter"/>
</dbReference>
<dbReference type="CDD" id="cd06223">
    <property type="entry name" value="PRTases_typeI"/>
    <property type="match status" value="1"/>
</dbReference>
<dbReference type="FunFam" id="3.40.50.2020:FF:000012">
    <property type="entry name" value="Phosphoribosyl pyrophosphate synthase-associated protein 2 isoform 1"/>
    <property type="match status" value="1"/>
</dbReference>
<dbReference type="FunFam" id="3.40.50.2020:FF:000014">
    <property type="entry name" value="Ribose-phosphate pyrophosphokinase 1"/>
    <property type="match status" value="1"/>
</dbReference>
<dbReference type="Gene3D" id="3.40.50.2020">
    <property type="match status" value="2"/>
</dbReference>
<dbReference type="InterPro" id="IPR029099">
    <property type="entry name" value="Pribosyltran_N"/>
</dbReference>
<dbReference type="InterPro" id="IPR000836">
    <property type="entry name" value="PRibTrfase_dom"/>
</dbReference>
<dbReference type="InterPro" id="IPR029057">
    <property type="entry name" value="PRTase-like"/>
</dbReference>
<dbReference type="InterPro" id="IPR005946">
    <property type="entry name" value="Rib-P_diPkinase"/>
</dbReference>
<dbReference type="NCBIfam" id="TIGR01251">
    <property type="entry name" value="ribP_PPkin"/>
    <property type="match status" value="1"/>
</dbReference>
<dbReference type="PANTHER" id="PTHR10210:SF29">
    <property type="entry name" value="PHOSPHORIBOSYL PYROPHOSPHATE SYNTHASE-ASSOCIATED PROTEIN 2"/>
    <property type="match status" value="1"/>
</dbReference>
<dbReference type="PANTHER" id="PTHR10210">
    <property type="entry name" value="RIBOSE-PHOSPHATE DIPHOSPHOKINASE FAMILY MEMBER"/>
    <property type="match status" value="1"/>
</dbReference>
<dbReference type="Pfam" id="PF14572">
    <property type="entry name" value="Pribosyl_synth"/>
    <property type="match status" value="1"/>
</dbReference>
<dbReference type="Pfam" id="PF13793">
    <property type="entry name" value="Pribosyltran_N"/>
    <property type="match status" value="1"/>
</dbReference>
<dbReference type="SMART" id="SM01400">
    <property type="entry name" value="Pribosyltran_N"/>
    <property type="match status" value="1"/>
</dbReference>
<dbReference type="SUPFAM" id="SSF53271">
    <property type="entry name" value="PRTase-like"/>
    <property type="match status" value="2"/>
</dbReference>
<name>KPRB_PONAB</name>
<comment type="function">
    <text evidence="1">Seems to play a negative regulatory role in 5-phosphoribose 1-diphosphate synthesis.</text>
</comment>
<comment type="subunit">
    <text evidence="1">Binds to PRPS1 and PRPS2.</text>
</comment>
<comment type="similarity">
    <text evidence="3">Belongs to the ribose-phosphate pyrophosphokinase family.</text>
</comment>
<reference key="1">
    <citation type="submission" date="2004-11" db="EMBL/GenBank/DDBJ databases">
        <authorList>
            <consortium name="The German cDNA consortium"/>
        </authorList>
    </citation>
    <scope>NUCLEOTIDE SEQUENCE [LARGE SCALE MRNA]</scope>
    <source>
        <tissue>Kidney</tissue>
    </source>
</reference>
<gene>
    <name type="primary">PRPSAP2</name>
</gene>
<proteinExistence type="evidence at transcript level"/>
<protein>
    <recommendedName>
        <fullName>Phosphoribosyl pyrophosphate synthase-associated protein 2</fullName>
        <shortName>PRPP synthase-associated protein 2</shortName>
    </recommendedName>
</protein>
<evidence type="ECO:0000250" key="1"/>
<evidence type="ECO:0000250" key="2">
    <source>
        <dbReference type="UniProtKB" id="O60256"/>
    </source>
</evidence>
<evidence type="ECO:0000305" key="3"/>